<comment type="function">
    <text evidence="1">Catalyzes the interconversion of 2-phosphoglycerate and 3-phosphoglycerate.</text>
</comment>
<comment type="catalytic activity">
    <reaction evidence="1">
        <text>(2R)-2-phosphoglycerate = (2R)-3-phosphoglycerate</text>
        <dbReference type="Rhea" id="RHEA:15901"/>
        <dbReference type="ChEBI" id="CHEBI:58272"/>
        <dbReference type="ChEBI" id="CHEBI:58289"/>
        <dbReference type="EC" id="5.4.2.12"/>
    </reaction>
</comment>
<comment type="cofactor">
    <cofactor evidence="1">
        <name>Mn(2+)</name>
        <dbReference type="ChEBI" id="CHEBI:29035"/>
    </cofactor>
    <text evidence="1">Binds 2 manganese ions per subunit.</text>
</comment>
<comment type="pathway">
    <text evidence="1">Carbohydrate degradation; glycolysis; pyruvate from D-glyceraldehyde 3-phosphate: step 3/5.</text>
</comment>
<comment type="subunit">
    <text evidence="1">Monomer.</text>
</comment>
<comment type="similarity">
    <text evidence="1">Belongs to the BPG-independent phosphoglycerate mutase family.</text>
</comment>
<reference key="1">
    <citation type="journal article" date="2008" name="Proc. Natl. Acad. Sci. U.S.A.">
        <title>Niche adaptation and genome expansion in the chlorophyll d-producing cyanobacterium Acaryochloris marina.</title>
        <authorList>
            <person name="Swingley W.D."/>
            <person name="Chen M."/>
            <person name="Cheung P.C."/>
            <person name="Conrad A.L."/>
            <person name="Dejesa L.C."/>
            <person name="Hao J."/>
            <person name="Honchak B.M."/>
            <person name="Karbach L.E."/>
            <person name="Kurdoglu A."/>
            <person name="Lahiri S."/>
            <person name="Mastrian S.D."/>
            <person name="Miyashita H."/>
            <person name="Page L."/>
            <person name="Ramakrishna P."/>
            <person name="Satoh S."/>
            <person name="Sattley W.M."/>
            <person name="Shimada Y."/>
            <person name="Taylor H.L."/>
            <person name="Tomo T."/>
            <person name="Tsuchiya T."/>
            <person name="Wang Z.T."/>
            <person name="Raymond J."/>
            <person name="Mimuro M."/>
            <person name="Blankenship R.E."/>
            <person name="Touchman J.W."/>
        </authorList>
    </citation>
    <scope>NUCLEOTIDE SEQUENCE [LARGE SCALE GENOMIC DNA]</scope>
    <source>
        <strain>MBIC 11017</strain>
    </source>
</reference>
<feature type="chain" id="PRO_1000084294" description="2,3-bisphosphoglycerate-independent phosphoglycerate mutase">
    <location>
        <begin position="1"/>
        <end position="534"/>
    </location>
</feature>
<feature type="active site" description="Phosphoserine intermediate" evidence="1">
    <location>
        <position position="65"/>
    </location>
</feature>
<feature type="binding site" evidence="1">
    <location>
        <position position="15"/>
    </location>
    <ligand>
        <name>Mn(2+)</name>
        <dbReference type="ChEBI" id="CHEBI:29035"/>
        <label>2</label>
    </ligand>
</feature>
<feature type="binding site" evidence="1">
    <location>
        <position position="65"/>
    </location>
    <ligand>
        <name>Mn(2+)</name>
        <dbReference type="ChEBI" id="CHEBI:29035"/>
        <label>2</label>
    </ligand>
</feature>
<feature type="binding site" evidence="1">
    <location>
        <position position="126"/>
    </location>
    <ligand>
        <name>substrate</name>
    </ligand>
</feature>
<feature type="binding site" evidence="1">
    <location>
        <begin position="156"/>
        <end position="157"/>
    </location>
    <ligand>
        <name>substrate</name>
    </ligand>
</feature>
<feature type="binding site" evidence="1">
    <location>
        <position position="188"/>
    </location>
    <ligand>
        <name>substrate</name>
    </ligand>
</feature>
<feature type="binding site" evidence="1">
    <location>
        <position position="194"/>
    </location>
    <ligand>
        <name>substrate</name>
    </ligand>
</feature>
<feature type="binding site" evidence="1">
    <location>
        <begin position="260"/>
        <end position="263"/>
    </location>
    <ligand>
        <name>substrate</name>
    </ligand>
</feature>
<feature type="binding site" evidence="1">
    <location>
        <position position="333"/>
    </location>
    <ligand>
        <name>substrate</name>
    </ligand>
</feature>
<feature type="binding site" evidence="1">
    <location>
        <position position="400"/>
    </location>
    <ligand>
        <name>Mn(2+)</name>
        <dbReference type="ChEBI" id="CHEBI:29035"/>
        <label>1</label>
    </ligand>
</feature>
<feature type="binding site" evidence="1">
    <location>
        <position position="404"/>
    </location>
    <ligand>
        <name>Mn(2+)</name>
        <dbReference type="ChEBI" id="CHEBI:29035"/>
        <label>1</label>
    </ligand>
</feature>
<feature type="binding site" evidence="1">
    <location>
        <position position="441"/>
    </location>
    <ligand>
        <name>Mn(2+)</name>
        <dbReference type="ChEBI" id="CHEBI:29035"/>
        <label>2</label>
    </ligand>
</feature>
<feature type="binding site" evidence="1">
    <location>
        <position position="442"/>
    </location>
    <ligand>
        <name>Mn(2+)</name>
        <dbReference type="ChEBI" id="CHEBI:29035"/>
        <label>2</label>
    </ligand>
</feature>
<feature type="binding site" evidence="1">
    <location>
        <position position="459"/>
    </location>
    <ligand>
        <name>Mn(2+)</name>
        <dbReference type="ChEBI" id="CHEBI:29035"/>
        <label>1</label>
    </ligand>
</feature>
<keyword id="KW-0324">Glycolysis</keyword>
<keyword id="KW-0413">Isomerase</keyword>
<keyword id="KW-0464">Manganese</keyword>
<keyword id="KW-0479">Metal-binding</keyword>
<keyword id="KW-1185">Reference proteome</keyword>
<evidence type="ECO:0000255" key="1">
    <source>
        <dbReference type="HAMAP-Rule" id="MF_01038"/>
    </source>
</evidence>
<proteinExistence type="inferred from homology"/>
<gene>
    <name evidence="1" type="primary">gpmI</name>
    <name type="ordered locus">AM1_1643</name>
</gene>
<protein>
    <recommendedName>
        <fullName evidence="1">2,3-bisphosphoglycerate-independent phosphoglycerate mutase</fullName>
        <shortName evidence="1">BPG-independent PGAM</shortName>
        <shortName evidence="1">Phosphoglyceromutase</shortName>
        <shortName evidence="1">iPGM</shortName>
        <ecNumber evidence="1">5.4.2.12</ecNumber>
    </recommendedName>
</protein>
<organism>
    <name type="scientific">Acaryochloris marina (strain MBIC 11017)</name>
    <dbReference type="NCBI Taxonomy" id="329726"/>
    <lineage>
        <taxon>Bacteria</taxon>
        <taxon>Bacillati</taxon>
        <taxon>Cyanobacteriota</taxon>
        <taxon>Cyanophyceae</taxon>
        <taxon>Acaryochloridales</taxon>
        <taxon>Acaryochloridaceae</taxon>
        <taxon>Acaryochloris</taxon>
    </lineage>
</organism>
<sequence>MTSTPVSPVVLVILDGWGYQENSDGNAIATANTPIIDSLWTAYPSTFIQTSGKAVGLPAGQMGNSEVGHLNLGAGRTVPQELVRIADAIEDGSLATNPALDKVCKQVSQASTKLHLIGLCSKGGVHAHSDHLLALLKLAKEHNISQVCIHAILDGRDTPPKSAKDEILRLQKQIAHIGVGQIVTLSGRYFAMDRDRRWDRIQQAYDVMVNDQVAVPRDWSPLDAITDAYDHKTTDEFLPPTRIAPGAIEAGDGVIFFNFRPDRARQLTQAFVDPKFDGFEREQVKPLHFVTFTQYDSDLPTDVAFKPQNLDNILGEIVANHGLKQLRLAETEKYAHVTYFFNGGIEDPLPGEDRILVPSPMVSTYDQDPPMSAAKVTEEAIAALDKRIYSLMVINYANTDMVGHTGMMDATIQAVETVDGCLGKLLNQVINVGGTLLITADHGNAERMWDETGNPWTAHTTNPVPFILVEGEGRKIPAHGTDVQLRADGRLADIAPTILDILQLPKPEEMTGSTLIQAAGFEVRQNKSPVRIHR</sequence>
<name>GPMI_ACAM1</name>
<dbReference type="EC" id="5.4.2.12" evidence="1"/>
<dbReference type="EMBL" id="CP000828">
    <property type="protein sequence ID" value="ABW26664.1"/>
    <property type="molecule type" value="Genomic_DNA"/>
</dbReference>
<dbReference type="RefSeq" id="WP_012162183.1">
    <property type="nucleotide sequence ID" value="NC_009925.1"/>
</dbReference>
<dbReference type="SMR" id="B0CA77"/>
<dbReference type="STRING" id="329726.AM1_1643"/>
<dbReference type="KEGG" id="amr:AM1_1643"/>
<dbReference type="eggNOG" id="COG0696">
    <property type="taxonomic scope" value="Bacteria"/>
</dbReference>
<dbReference type="HOGENOM" id="CLU_026099_2_0_3"/>
<dbReference type="OrthoDB" id="9800863at2"/>
<dbReference type="UniPathway" id="UPA00109">
    <property type="reaction ID" value="UER00186"/>
</dbReference>
<dbReference type="Proteomes" id="UP000000268">
    <property type="component" value="Chromosome"/>
</dbReference>
<dbReference type="GO" id="GO:0005829">
    <property type="term" value="C:cytosol"/>
    <property type="evidence" value="ECO:0007669"/>
    <property type="project" value="TreeGrafter"/>
</dbReference>
<dbReference type="GO" id="GO:0030145">
    <property type="term" value="F:manganese ion binding"/>
    <property type="evidence" value="ECO:0007669"/>
    <property type="project" value="UniProtKB-UniRule"/>
</dbReference>
<dbReference type="GO" id="GO:0004619">
    <property type="term" value="F:phosphoglycerate mutase activity"/>
    <property type="evidence" value="ECO:0007669"/>
    <property type="project" value="UniProtKB-EC"/>
</dbReference>
<dbReference type="GO" id="GO:0006007">
    <property type="term" value="P:glucose catabolic process"/>
    <property type="evidence" value="ECO:0007669"/>
    <property type="project" value="InterPro"/>
</dbReference>
<dbReference type="GO" id="GO:0006096">
    <property type="term" value="P:glycolytic process"/>
    <property type="evidence" value="ECO:0007669"/>
    <property type="project" value="UniProtKB-UniRule"/>
</dbReference>
<dbReference type="CDD" id="cd16010">
    <property type="entry name" value="iPGM"/>
    <property type="match status" value="1"/>
</dbReference>
<dbReference type="FunFam" id="3.40.1450.10:FF:000002">
    <property type="entry name" value="2,3-bisphosphoglycerate-independent phosphoglycerate mutase"/>
    <property type="match status" value="1"/>
</dbReference>
<dbReference type="Gene3D" id="3.40.720.10">
    <property type="entry name" value="Alkaline Phosphatase, subunit A"/>
    <property type="match status" value="1"/>
</dbReference>
<dbReference type="Gene3D" id="3.40.1450.10">
    <property type="entry name" value="BPG-independent phosphoglycerate mutase, domain B"/>
    <property type="match status" value="1"/>
</dbReference>
<dbReference type="HAMAP" id="MF_01038">
    <property type="entry name" value="GpmI"/>
    <property type="match status" value="1"/>
</dbReference>
<dbReference type="InterPro" id="IPR017850">
    <property type="entry name" value="Alkaline_phosphatase_core_sf"/>
</dbReference>
<dbReference type="InterPro" id="IPR011258">
    <property type="entry name" value="BPG-indep_PGM_N"/>
</dbReference>
<dbReference type="InterPro" id="IPR006124">
    <property type="entry name" value="Metalloenzyme"/>
</dbReference>
<dbReference type="InterPro" id="IPR036646">
    <property type="entry name" value="PGAM_B_sf"/>
</dbReference>
<dbReference type="InterPro" id="IPR005995">
    <property type="entry name" value="Pgm_bpd_ind"/>
</dbReference>
<dbReference type="NCBIfam" id="TIGR01307">
    <property type="entry name" value="pgm_bpd_ind"/>
    <property type="match status" value="1"/>
</dbReference>
<dbReference type="PANTHER" id="PTHR31637">
    <property type="entry name" value="2,3-BISPHOSPHOGLYCERATE-INDEPENDENT PHOSPHOGLYCERATE MUTASE"/>
    <property type="match status" value="1"/>
</dbReference>
<dbReference type="PANTHER" id="PTHR31637:SF0">
    <property type="entry name" value="2,3-BISPHOSPHOGLYCERATE-INDEPENDENT PHOSPHOGLYCERATE MUTASE"/>
    <property type="match status" value="1"/>
</dbReference>
<dbReference type="Pfam" id="PF06415">
    <property type="entry name" value="iPGM_N"/>
    <property type="match status" value="1"/>
</dbReference>
<dbReference type="Pfam" id="PF01676">
    <property type="entry name" value="Metalloenzyme"/>
    <property type="match status" value="1"/>
</dbReference>
<dbReference type="PIRSF" id="PIRSF001492">
    <property type="entry name" value="IPGAM"/>
    <property type="match status" value="1"/>
</dbReference>
<dbReference type="SUPFAM" id="SSF64158">
    <property type="entry name" value="2,3-Bisphosphoglycerate-independent phosphoglycerate mutase, substrate-binding domain"/>
    <property type="match status" value="1"/>
</dbReference>
<dbReference type="SUPFAM" id="SSF53649">
    <property type="entry name" value="Alkaline phosphatase-like"/>
    <property type="match status" value="1"/>
</dbReference>
<accession>B0CA77</accession>